<sequence length="303" mass="33278">MYIQILGSAAGGGFPQWNCNCVNCAGFRDGSLRAHARTQSSIALSDDGINWVLCNASPDIRAQLQGFAPMQPGRALRDTGISAIVLMDSQIDHTTGLLSLREGCPHQVWCTDMVHEDLSTGFPLFEMLKHWNGGLSWNRIELQGSFVIPACPNLRFTPFPLRSAAPPYSPHRFDPHPGDNIGLLVEDTRTGGKLFYAPGLGKVDEALAEKMRDADCLLVDGTMWDDDEMQRRGVGTRTGREMGHLAQNGPGGMLEVLEGFPEPRKVLIHINNTNPILDEDSPERAELARRNVEVAFDGMSIEL</sequence>
<accession>Q4ZMC4</accession>
<keyword id="KW-0884">PQQ biosynthesis</keyword>
<keyword id="KW-0813">Transport</keyword>
<evidence type="ECO:0000255" key="1">
    <source>
        <dbReference type="HAMAP-Rule" id="MF_00653"/>
    </source>
</evidence>
<reference key="1">
    <citation type="journal article" date="2005" name="Proc. Natl. Acad. Sci. U.S.A.">
        <title>Comparison of the complete genome sequences of Pseudomonas syringae pv. syringae B728a and pv. tomato DC3000.</title>
        <authorList>
            <person name="Feil H."/>
            <person name="Feil W.S."/>
            <person name="Chain P."/>
            <person name="Larimer F."/>
            <person name="Dibartolo G."/>
            <person name="Copeland A."/>
            <person name="Lykidis A."/>
            <person name="Trong S."/>
            <person name="Nolan M."/>
            <person name="Goltsman E."/>
            <person name="Thiel J."/>
            <person name="Malfatti S."/>
            <person name="Loper J.E."/>
            <person name="Lapidus A."/>
            <person name="Detter J.C."/>
            <person name="Land M."/>
            <person name="Richardson P.M."/>
            <person name="Kyrpides N.C."/>
            <person name="Ivanova N."/>
            <person name="Lindow S.E."/>
        </authorList>
    </citation>
    <scope>NUCLEOTIDE SEQUENCE [LARGE SCALE GENOMIC DNA]</scope>
    <source>
        <strain>B728a</strain>
    </source>
</reference>
<protein>
    <recommendedName>
        <fullName evidence="1">Coenzyme PQQ synthesis protein B</fullName>
    </recommendedName>
    <alternativeName>
        <fullName evidence="1">Pyrroloquinoline quinone biosynthesis protein B</fullName>
    </alternativeName>
</protein>
<organism>
    <name type="scientific">Pseudomonas syringae pv. syringae (strain B728a)</name>
    <dbReference type="NCBI Taxonomy" id="205918"/>
    <lineage>
        <taxon>Bacteria</taxon>
        <taxon>Pseudomonadati</taxon>
        <taxon>Pseudomonadota</taxon>
        <taxon>Gammaproteobacteria</taxon>
        <taxon>Pseudomonadales</taxon>
        <taxon>Pseudomonadaceae</taxon>
        <taxon>Pseudomonas</taxon>
        <taxon>Pseudomonas syringae</taxon>
    </lineage>
</organism>
<gene>
    <name evidence="1" type="primary">pqqB</name>
    <name type="ordered locus">Psyr_4671</name>
</gene>
<proteinExistence type="inferred from homology"/>
<feature type="chain" id="PRO_1000061658" description="Coenzyme PQQ synthesis protein B">
    <location>
        <begin position="1"/>
        <end position="303"/>
    </location>
</feature>
<comment type="function">
    <text evidence="1">May be involved in the transport of PQQ or its precursor to the periplasm.</text>
</comment>
<comment type="pathway">
    <text evidence="1">Cofactor biosynthesis; pyrroloquinoline quinone biosynthesis.</text>
</comment>
<comment type="similarity">
    <text evidence="1">Belongs to the PqqB family.</text>
</comment>
<name>PQQB_PSEU2</name>
<dbReference type="EMBL" id="CP000075">
    <property type="protein sequence ID" value="AAY39698.1"/>
    <property type="molecule type" value="Genomic_DNA"/>
</dbReference>
<dbReference type="RefSeq" id="WP_011269163.1">
    <property type="nucleotide sequence ID" value="NC_007005.1"/>
</dbReference>
<dbReference type="RefSeq" id="YP_237736.1">
    <property type="nucleotide sequence ID" value="NC_007005.1"/>
</dbReference>
<dbReference type="SMR" id="Q4ZMC4"/>
<dbReference type="STRING" id="205918.Psyr_4671"/>
<dbReference type="KEGG" id="psb:Psyr_4671"/>
<dbReference type="PATRIC" id="fig|205918.7.peg.4817"/>
<dbReference type="eggNOG" id="COG1235">
    <property type="taxonomic scope" value="Bacteria"/>
</dbReference>
<dbReference type="HOGENOM" id="CLU_061120_0_0_6"/>
<dbReference type="OrthoDB" id="9778305at2"/>
<dbReference type="UniPathway" id="UPA00539"/>
<dbReference type="Proteomes" id="UP000000426">
    <property type="component" value="Chromosome"/>
</dbReference>
<dbReference type="GO" id="GO:0018189">
    <property type="term" value="P:pyrroloquinoline quinone biosynthetic process"/>
    <property type="evidence" value="ECO:0007669"/>
    <property type="project" value="UniProtKB-UniRule"/>
</dbReference>
<dbReference type="CDD" id="cd16274">
    <property type="entry name" value="PQQB-like_MBL-fold"/>
    <property type="match status" value="1"/>
</dbReference>
<dbReference type="Gene3D" id="3.60.15.10">
    <property type="entry name" value="Ribonuclease Z/Hydroxyacylglutathione hydrolase-like"/>
    <property type="match status" value="1"/>
</dbReference>
<dbReference type="HAMAP" id="MF_00653">
    <property type="entry name" value="PQQ_syn_PqqB"/>
    <property type="match status" value="1"/>
</dbReference>
<dbReference type="InterPro" id="IPR001279">
    <property type="entry name" value="Metallo-B-lactamas"/>
</dbReference>
<dbReference type="InterPro" id="IPR011842">
    <property type="entry name" value="PQQ_synth_PqqB"/>
</dbReference>
<dbReference type="InterPro" id="IPR036866">
    <property type="entry name" value="RibonucZ/Hydroxyglut_hydro"/>
</dbReference>
<dbReference type="NCBIfam" id="TIGR02108">
    <property type="entry name" value="PQQ_syn_pqqB"/>
    <property type="match status" value="1"/>
</dbReference>
<dbReference type="PANTHER" id="PTHR42663:SF7">
    <property type="entry name" value="COENZYME PQQ SYNTHESIS PROTEIN B"/>
    <property type="match status" value="1"/>
</dbReference>
<dbReference type="PANTHER" id="PTHR42663">
    <property type="entry name" value="HYDROLASE C777.06C-RELATED-RELATED"/>
    <property type="match status" value="1"/>
</dbReference>
<dbReference type="Pfam" id="PF12706">
    <property type="entry name" value="Lactamase_B_2"/>
    <property type="match status" value="1"/>
</dbReference>
<dbReference type="SUPFAM" id="SSF56281">
    <property type="entry name" value="Metallo-hydrolase/oxidoreductase"/>
    <property type="match status" value="1"/>
</dbReference>